<feature type="chain" id="PRO_1000199388" description="Proline--tRNA ligase">
    <location>
        <begin position="1"/>
        <end position="565"/>
    </location>
</feature>
<proteinExistence type="inferred from homology"/>
<accession>B2SFQ6</accession>
<dbReference type="EC" id="6.1.1.15" evidence="1"/>
<dbReference type="EMBL" id="CP000915">
    <property type="protein sequence ID" value="ACD30599.1"/>
    <property type="molecule type" value="Genomic_DNA"/>
</dbReference>
<dbReference type="SMR" id="B2SFQ6"/>
<dbReference type="KEGG" id="ftm:FTM_0608"/>
<dbReference type="HOGENOM" id="CLU_016739_0_0_6"/>
<dbReference type="GO" id="GO:0005829">
    <property type="term" value="C:cytosol"/>
    <property type="evidence" value="ECO:0007669"/>
    <property type="project" value="TreeGrafter"/>
</dbReference>
<dbReference type="GO" id="GO:0002161">
    <property type="term" value="F:aminoacyl-tRNA deacylase activity"/>
    <property type="evidence" value="ECO:0007669"/>
    <property type="project" value="InterPro"/>
</dbReference>
<dbReference type="GO" id="GO:0005524">
    <property type="term" value="F:ATP binding"/>
    <property type="evidence" value="ECO:0007669"/>
    <property type="project" value="UniProtKB-UniRule"/>
</dbReference>
<dbReference type="GO" id="GO:0004827">
    <property type="term" value="F:proline-tRNA ligase activity"/>
    <property type="evidence" value="ECO:0007669"/>
    <property type="project" value="UniProtKB-UniRule"/>
</dbReference>
<dbReference type="GO" id="GO:0006433">
    <property type="term" value="P:prolyl-tRNA aminoacylation"/>
    <property type="evidence" value="ECO:0007669"/>
    <property type="project" value="UniProtKB-UniRule"/>
</dbReference>
<dbReference type="CDD" id="cd04334">
    <property type="entry name" value="ProRS-INS"/>
    <property type="match status" value="1"/>
</dbReference>
<dbReference type="CDD" id="cd00861">
    <property type="entry name" value="ProRS_anticodon_short"/>
    <property type="match status" value="1"/>
</dbReference>
<dbReference type="CDD" id="cd00779">
    <property type="entry name" value="ProRS_core_prok"/>
    <property type="match status" value="1"/>
</dbReference>
<dbReference type="FunFam" id="3.30.930.10:FF:000042">
    <property type="entry name" value="probable proline--tRNA ligase, mitochondrial"/>
    <property type="match status" value="1"/>
</dbReference>
<dbReference type="Gene3D" id="3.40.50.800">
    <property type="entry name" value="Anticodon-binding domain"/>
    <property type="match status" value="1"/>
</dbReference>
<dbReference type="Gene3D" id="3.30.930.10">
    <property type="entry name" value="Bira Bifunctional Protein, Domain 2"/>
    <property type="match status" value="2"/>
</dbReference>
<dbReference type="HAMAP" id="MF_01569">
    <property type="entry name" value="Pro_tRNA_synth_type1"/>
    <property type="match status" value="1"/>
</dbReference>
<dbReference type="InterPro" id="IPR002314">
    <property type="entry name" value="aa-tRNA-synt_IIb"/>
</dbReference>
<dbReference type="InterPro" id="IPR006195">
    <property type="entry name" value="aa-tRNA-synth_II"/>
</dbReference>
<dbReference type="InterPro" id="IPR045864">
    <property type="entry name" value="aa-tRNA-synth_II/BPL/LPL"/>
</dbReference>
<dbReference type="InterPro" id="IPR004154">
    <property type="entry name" value="Anticodon-bd"/>
</dbReference>
<dbReference type="InterPro" id="IPR036621">
    <property type="entry name" value="Anticodon-bd_dom_sf"/>
</dbReference>
<dbReference type="InterPro" id="IPR002316">
    <property type="entry name" value="Pro-tRNA-ligase_IIa"/>
</dbReference>
<dbReference type="InterPro" id="IPR004500">
    <property type="entry name" value="Pro-tRNA-synth_IIa_bac-type"/>
</dbReference>
<dbReference type="InterPro" id="IPR023717">
    <property type="entry name" value="Pro-tRNA-Synthase_IIa_type1"/>
</dbReference>
<dbReference type="InterPro" id="IPR050062">
    <property type="entry name" value="Pro-tRNA_synthetase"/>
</dbReference>
<dbReference type="InterPro" id="IPR044140">
    <property type="entry name" value="ProRS_anticodon_short"/>
</dbReference>
<dbReference type="InterPro" id="IPR033730">
    <property type="entry name" value="ProRS_core_prok"/>
</dbReference>
<dbReference type="InterPro" id="IPR036754">
    <property type="entry name" value="YbaK/aa-tRNA-synt-asso_dom_sf"/>
</dbReference>
<dbReference type="InterPro" id="IPR007214">
    <property type="entry name" value="YbaK/aa-tRNA-synth-assoc-dom"/>
</dbReference>
<dbReference type="NCBIfam" id="NF006625">
    <property type="entry name" value="PRK09194.1"/>
    <property type="match status" value="1"/>
</dbReference>
<dbReference type="NCBIfam" id="TIGR00409">
    <property type="entry name" value="proS_fam_II"/>
    <property type="match status" value="1"/>
</dbReference>
<dbReference type="PANTHER" id="PTHR42753">
    <property type="entry name" value="MITOCHONDRIAL RIBOSOME PROTEIN L39/PROLYL-TRNA LIGASE FAMILY MEMBER"/>
    <property type="match status" value="1"/>
</dbReference>
<dbReference type="PANTHER" id="PTHR42753:SF2">
    <property type="entry name" value="PROLINE--TRNA LIGASE"/>
    <property type="match status" value="1"/>
</dbReference>
<dbReference type="Pfam" id="PF03129">
    <property type="entry name" value="HGTP_anticodon"/>
    <property type="match status" value="1"/>
</dbReference>
<dbReference type="Pfam" id="PF00587">
    <property type="entry name" value="tRNA-synt_2b"/>
    <property type="match status" value="1"/>
</dbReference>
<dbReference type="Pfam" id="PF04073">
    <property type="entry name" value="tRNA_edit"/>
    <property type="match status" value="1"/>
</dbReference>
<dbReference type="PRINTS" id="PR01046">
    <property type="entry name" value="TRNASYNTHPRO"/>
</dbReference>
<dbReference type="SUPFAM" id="SSF52954">
    <property type="entry name" value="Class II aaRS ABD-related"/>
    <property type="match status" value="1"/>
</dbReference>
<dbReference type="SUPFAM" id="SSF55681">
    <property type="entry name" value="Class II aaRS and biotin synthetases"/>
    <property type="match status" value="1"/>
</dbReference>
<dbReference type="SUPFAM" id="SSF55826">
    <property type="entry name" value="YbaK/ProRS associated domain"/>
    <property type="match status" value="1"/>
</dbReference>
<dbReference type="PROSITE" id="PS50862">
    <property type="entry name" value="AA_TRNA_LIGASE_II"/>
    <property type="match status" value="1"/>
</dbReference>
<comment type="function">
    <text evidence="1">Catalyzes the attachment of proline to tRNA(Pro) in a two-step reaction: proline is first activated by ATP to form Pro-AMP and then transferred to the acceptor end of tRNA(Pro). As ProRS can inadvertently accommodate and process non-cognate amino acids such as alanine and cysteine, to avoid such errors it has two additional distinct editing activities against alanine. One activity is designated as 'pretransfer' editing and involves the tRNA(Pro)-independent hydrolysis of activated Ala-AMP. The other activity is designated 'posttransfer' editing and involves deacylation of mischarged Ala-tRNA(Pro). The misacylated Cys-tRNA(Pro) is not edited by ProRS.</text>
</comment>
<comment type="catalytic activity">
    <reaction evidence="1">
        <text>tRNA(Pro) + L-proline + ATP = L-prolyl-tRNA(Pro) + AMP + diphosphate</text>
        <dbReference type="Rhea" id="RHEA:14305"/>
        <dbReference type="Rhea" id="RHEA-COMP:9700"/>
        <dbReference type="Rhea" id="RHEA-COMP:9702"/>
        <dbReference type="ChEBI" id="CHEBI:30616"/>
        <dbReference type="ChEBI" id="CHEBI:33019"/>
        <dbReference type="ChEBI" id="CHEBI:60039"/>
        <dbReference type="ChEBI" id="CHEBI:78442"/>
        <dbReference type="ChEBI" id="CHEBI:78532"/>
        <dbReference type="ChEBI" id="CHEBI:456215"/>
        <dbReference type="EC" id="6.1.1.15"/>
    </reaction>
</comment>
<comment type="subunit">
    <text evidence="1">Homodimer.</text>
</comment>
<comment type="subcellular location">
    <subcellularLocation>
        <location evidence="1">Cytoplasm</location>
    </subcellularLocation>
</comment>
<comment type="domain">
    <text evidence="1">Consists of three domains: the N-terminal catalytic domain, the editing domain and the C-terminal anticodon-binding domain.</text>
</comment>
<comment type="similarity">
    <text evidence="1">Belongs to the class-II aminoacyl-tRNA synthetase family. ProS type 1 subfamily.</text>
</comment>
<gene>
    <name evidence="1" type="primary">proS</name>
    <name type="ordered locus">FTM_0608</name>
</gene>
<reference key="1">
    <citation type="journal article" date="2009" name="PLoS Pathog.">
        <title>Molecular evolutionary consequences of niche restriction in Francisella tularensis, a facultative intracellular pathogen.</title>
        <authorList>
            <person name="Larsson P."/>
            <person name="Elfsmark D."/>
            <person name="Svensson K."/>
            <person name="Wikstroem P."/>
            <person name="Forsman M."/>
            <person name="Brettin T."/>
            <person name="Keim P."/>
            <person name="Johansson A."/>
        </authorList>
    </citation>
    <scope>NUCLEOTIDE SEQUENCE [LARGE SCALE GENOMIC DNA]</scope>
    <source>
        <strain>FSC147</strain>
    </source>
</reference>
<sequence>MKATQTLIATTKELPKEAVLISHQYMLKAGLIKKLASGIYTWMPLGLKVLQKIQNIVRDEMNKAGASELLLPSILPSELLQETHRWDKFGPELLKLHDRHNRDFCYGPTHEEPIVDMARDTIKSYKQLPLNLYQIQTKFRDEIRPRFGVMRAREFIMKDAYSFHENSQCLRNTYNTMYATYCNILDKIGLAYRPVKADTGAIGGDNSHEFQVLANAGEDIICYSNGSDYAANIELATYAKPDLSKRVNSQNTIEKIHTPNIKTIEKLYKEMSFDIKKTIKTMVIKDAGGNFFALVIRGDHELNETKINKLDQIIAPYTLATKEEIFSIFNANPGSLGIYNCPISIIADYSAIAITDLVCGANEDDYHFTNVNWDRDVTNYQIADIRNVVTGDISPDCKGTLELTNGIEVGHIFELEDVYSKPMNANIIGQDGKSKPMLMGCYGFGVSRVMAAAIEQSHDENGIIWPESIAPYQVAILPINYNKSDKVKEVADKLYQDLLGDGIDVLLDDRGARPGVMFADADLIGYSHHVVIGDKLLEQGLIEYKNRKTQEKQEITIAELIKILK</sequence>
<keyword id="KW-0030">Aminoacyl-tRNA synthetase</keyword>
<keyword id="KW-0067">ATP-binding</keyword>
<keyword id="KW-0963">Cytoplasm</keyword>
<keyword id="KW-0436">Ligase</keyword>
<keyword id="KW-0547">Nucleotide-binding</keyword>
<keyword id="KW-0648">Protein biosynthesis</keyword>
<name>SYP_FRATM</name>
<organism>
    <name type="scientific">Francisella tularensis subsp. mediasiatica (strain FSC147)</name>
    <dbReference type="NCBI Taxonomy" id="441952"/>
    <lineage>
        <taxon>Bacteria</taxon>
        <taxon>Pseudomonadati</taxon>
        <taxon>Pseudomonadota</taxon>
        <taxon>Gammaproteobacteria</taxon>
        <taxon>Thiotrichales</taxon>
        <taxon>Francisellaceae</taxon>
        <taxon>Francisella</taxon>
    </lineage>
</organism>
<protein>
    <recommendedName>
        <fullName evidence="1">Proline--tRNA ligase</fullName>
        <ecNumber evidence="1">6.1.1.15</ecNumber>
    </recommendedName>
    <alternativeName>
        <fullName evidence="1">Prolyl-tRNA synthetase</fullName>
        <shortName evidence="1">ProRS</shortName>
    </alternativeName>
</protein>
<evidence type="ECO:0000255" key="1">
    <source>
        <dbReference type="HAMAP-Rule" id="MF_01569"/>
    </source>
</evidence>